<comment type="function">
    <text evidence="1">Catalyzes the folate-dependent formation of 5-methyl-uridine at position 54 (M-5-U54) in all tRNAs.</text>
</comment>
<comment type="catalytic activity">
    <reaction evidence="1">
        <text>uridine(54) in tRNA + (6R)-5,10-methylene-5,6,7,8-tetrahydrofolate + NADH + H(+) = 5-methyluridine(54) in tRNA + (6S)-5,6,7,8-tetrahydrofolate + NAD(+)</text>
        <dbReference type="Rhea" id="RHEA:16873"/>
        <dbReference type="Rhea" id="RHEA-COMP:10167"/>
        <dbReference type="Rhea" id="RHEA-COMP:10193"/>
        <dbReference type="ChEBI" id="CHEBI:15378"/>
        <dbReference type="ChEBI" id="CHEBI:15636"/>
        <dbReference type="ChEBI" id="CHEBI:57453"/>
        <dbReference type="ChEBI" id="CHEBI:57540"/>
        <dbReference type="ChEBI" id="CHEBI:57945"/>
        <dbReference type="ChEBI" id="CHEBI:65315"/>
        <dbReference type="ChEBI" id="CHEBI:74447"/>
        <dbReference type="EC" id="2.1.1.74"/>
    </reaction>
</comment>
<comment type="catalytic activity">
    <reaction evidence="1">
        <text>uridine(54) in tRNA + (6R)-5,10-methylene-5,6,7,8-tetrahydrofolate + NADPH + H(+) = 5-methyluridine(54) in tRNA + (6S)-5,6,7,8-tetrahydrofolate + NADP(+)</text>
        <dbReference type="Rhea" id="RHEA:62372"/>
        <dbReference type="Rhea" id="RHEA-COMP:10167"/>
        <dbReference type="Rhea" id="RHEA-COMP:10193"/>
        <dbReference type="ChEBI" id="CHEBI:15378"/>
        <dbReference type="ChEBI" id="CHEBI:15636"/>
        <dbReference type="ChEBI" id="CHEBI:57453"/>
        <dbReference type="ChEBI" id="CHEBI:57783"/>
        <dbReference type="ChEBI" id="CHEBI:58349"/>
        <dbReference type="ChEBI" id="CHEBI:65315"/>
        <dbReference type="ChEBI" id="CHEBI:74447"/>
        <dbReference type="EC" id="2.1.1.74"/>
    </reaction>
</comment>
<comment type="cofactor">
    <cofactor evidence="1">
        <name>FAD</name>
        <dbReference type="ChEBI" id="CHEBI:57692"/>
    </cofactor>
</comment>
<comment type="subcellular location">
    <subcellularLocation>
        <location evidence="1">Cytoplasm</location>
    </subcellularLocation>
</comment>
<comment type="similarity">
    <text evidence="1">Belongs to the MnmG family. TrmFO subfamily.</text>
</comment>
<keyword id="KW-0963">Cytoplasm</keyword>
<keyword id="KW-0274">FAD</keyword>
<keyword id="KW-0285">Flavoprotein</keyword>
<keyword id="KW-0489">Methyltransferase</keyword>
<keyword id="KW-0520">NAD</keyword>
<keyword id="KW-0521">NADP</keyword>
<keyword id="KW-0808">Transferase</keyword>
<keyword id="KW-0819">tRNA processing</keyword>
<sequence length="477" mass="50992">MISAVLTTQPVHIIGAGLAGSEAAWQVARAGIRVVLHEMRPDRMTQAHKTDGLAELVCSNSFRSDDAANNAVGLLHAEMRKLGSLVMRAADANQVPAGGALAVDRDGFSAAVTKALAEHPLIEIRREEIGGLPPEDWGNVIIATGPLTSAPLAEAIRALTDESALAFFDAIAPIVHRDSIDMSVAWFQSRYDKAGPGGSGADYLNCPMTREQYDGFVDALIEGEKVDFKDWERDTPYFDGCLPIEVMAERGRETLRHGPMKPVGLTNPHNPLVKSYAIVQLRQDNKLGTLFNMVGFQTKLNYGAQQRVFRTIPGLENAEFARLGGLHRNTFLNSPKLLDPQLRLRAAPRLRFAGQMTGCEGYVESAGIGLVAGLCAAADAIGQTLAAPPPTTALGALLGHITGGHIETIDAGPRSFQPMNINFGLFPPLATAPTHGPDGKKLRGPEKSVAKKQALSARALADLDRWIGDCLKLPAAA</sequence>
<evidence type="ECO:0000255" key="1">
    <source>
        <dbReference type="HAMAP-Rule" id="MF_01037"/>
    </source>
</evidence>
<dbReference type="EC" id="2.1.1.74" evidence="1"/>
<dbReference type="EMBL" id="CP000283">
    <property type="protein sequence ID" value="ABE40001.1"/>
    <property type="molecule type" value="Genomic_DNA"/>
</dbReference>
<dbReference type="SMR" id="Q136I8"/>
<dbReference type="STRING" id="316057.RPD_2773"/>
<dbReference type="KEGG" id="rpd:RPD_2773"/>
<dbReference type="eggNOG" id="COG1206">
    <property type="taxonomic scope" value="Bacteria"/>
</dbReference>
<dbReference type="HOGENOM" id="CLU_033057_1_0_5"/>
<dbReference type="BioCyc" id="RPAL316057:RPD_RS13930-MONOMER"/>
<dbReference type="Proteomes" id="UP000001818">
    <property type="component" value="Chromosome"/>
</dbReference>
<dbReference type="GO" id="GO:0005829">
    <property type="term" value="C:cytosol"/>
    <property type="evidence" value="ECO:0007669"/>
    <property type="project" value="TreeGrafter"/>
</dbReference>
<dbReference type="GO" id="GO:0050660">
    <property type="term" value="F:flavin adenine dinucleotide binding"/>
    <property type="evidence" value="ECO:0007669"/>
    <property type="project" value="UniProtKB-UniRule"/>
</dbReference>
<dbReference type="GO" id="GO:0047151">
    <property type="term" value="F:tRNA (uracil(54)-C5)-methyltransferase activity, 5,10-methylenetetrahydrofolate-dependent"/>
    <property type="evidence" value="ECO:0007669"/>
    <property type="project" value="UniProtKB-UniRule"/>
</dbReference>
<dbReference type="GO" id="GO:0030488">
    <property type="term" value="P:tRNA methylation"/>
    <property type="evidence" value="ECO:0007669"/>
    <property type="project" value="TreeGrafter"/>
</dbReference>
<dbReference type="GO" id="GO:0002098">
    <property type="term" value="P:tRNA wobble uridine modification"/>
    <property type="evidence" value="ECO:0007669"/>
    <property type="project" value="TreeGrafter"/>
</dbReference>
<dbReference type="FunFam" id="3.50.50.60:FF:000359">
    <property type="entry name" value="Methylenetetrahydrofolate--tRNA-(uracil-5-)-methyltransferase TrmFO"/>
    <property type="match status" value="1"/>
</dbReference>
<dbReference type="Gene3D" id="3.50.50.60">
    <property type="entry name" value="FAD/NAD(P)-binding domain"/>
    <property type="match status" value="2"/>
</dbReference>
<dbReference type="HAMAP" id="MF_01037">
    <property type="entry name" value="TrmFO"/>
    <property type="match status" value="1"/>
</dbReference>
<dbReference type="InterPro" id="IPR036188">
    <property type="entry name" value="FAD/NAD-bd_sf"/>
</dbReference>
<dbReference type="InterPro" id="IPR002218">
    <property type="entry name" value="MnmG-rel"/>
</dbReference>
<dbReference type="InterPro" id="IPR040131">
    <property type="entry name" value="MnmG_N"/>
</dbReference>
<dbReference type="InterPro" id="IPR004417">
    <property type="entry name" value="TrmFO"/>
</dbReference>
<dbReference type="NCBIfam" id="TIGR00137">
    <property type="entry name" value="gid_trmFO"/>
    <property type="match status" value="1"/>
</dbReference>
<dbReference type="NCBIfam" id="NF003739">
    <property type="entry name" value="PRK05335.1"/>
    <property type="match status" value="1"/>
</dbReference>
<dbReference type="PANTHER" id="PTHR11806">
    <property type="entry name" value="GLUCOSE INHIBITED DIVISION PROTEIN A"/>
    <property type="match status" value="1"/>
</dbReference>
<dbReference type="PANTHER" id="PTHR11806:SF2">
    <property type="entry name" value="METHYLENETETRAHYDROFOLATE--TRNA-(URACIL-5-)-METHYLTRANSFERASE TRMFO"/>
    <property type="match status" value="1"/>
</dbReference>
<dbReference type="Pfam" id="PF01134">
    <property type="entry name" value="GIDA"/>
    <property type="match status" value="1"/>
</dbReference>
<dbReference type="SUPFAM" id="SSF51905">
    <property type="entry name" value="FAD/NAD(P)-binding domain"/>
    <property type="match status" value="1"/>
</dbReference>
<reference key="1">
    <citation type="submission" date="2006-03" db="EMBL/GenBank/DDBJ databases">
        <title>Complete sequence of Rhodopseudomonas palustris BisB5.</title>
        <authorList>
            <consortium name="US DOE Joint Genome Institute"/>
            <person name="Copeland A."/>
            <person name="Lucas S."/>
            <person name="Lapidus A."/>
            <person name="Barry K."/>
            <person name="Detter J.C."/>
            <person name="Glavina del Rio T."/>
            <person name="Hammon N."/>
            <person name="Israni S."/>
            <person name="Dalin E."/>
            <person name="Tice H."/>
            <person name="Pitluck S."/>
            <person name="Chain P."/>
            <person name="Malfatti S."/>
            <person name="Shin M."/>
            <person name="Vergez L."/>
            <person name="Schmutz J."/>
            <person name="Larimer F."/>
            <person name="Land M."/>
            <person name="Hauser L."/>
            <person name="Pelletier D.A."/>
            <person name="Kyrpides N."/>
            <person name="Lykidis A."/>
            <person name="Oda Y."/>
            <person name="Harwood C.S."/>
            <person name="Richardson P."/>
        </authorList>
    </citation>
    <scope>NUCLEOTIDE SEQUENCE [LARGE SCALE GENOMIC DNA]</scope>
    <source>
        <strain>BisB5</strain>
    </source>
</reference>
<name>TRMFO_RHOPS</name>
<protein>
    <recommendedName>
        <fullName evidence="1">Methylenetetrahydrofolate--tRNA-(uracil-5-)-methyltransferase TrmFO</fullName>
        <ecNumber evidence="1">2.1.1.74</ecNumber>
    </recommendedName>
    <alternativeName>
        <fullName evidence="1">Folate-dependent tRNA (uracil-5-)-methyltransferase</fullName>
    </alternativeName>
    <alternativeName>
        <fullName evidence="1">Folate-dependent tRNA(M-5-U54)-methyltransferase</fullName>
    </alternativeName>
</protein>
<feature type="chain" id="PRO_0000346388" description="Methylenetetrahydrofolate--tRNA-(uracil-5-)-methyltransferase TrmFO">
    <location>
        <begin position="1"/>
        <end position="477"/>
    </location>
</feature>
<feature type="binding site" evidence="1">
    <location>
        <begin position="15"/>
        <end position="20"/>
    </location>
    <ligand>
        <name>FAD</name>
        <dbReference type="ChEBI" id="CHEBI:57692"/>
    </ligand>
</feature>
<proteinExistence type="inferred from homology"/>
<gene>
    <name evidence="1" type="primary">trmFO</name>
    <name type="ordered locus">RPD_2773</name>
</gene>
<organism>
    <name type="scientific">Rhodopseudomonas palustris (strain BisB5)</name>
    <dbReference type="NCBI Taxonomy" id="316057"/>
    <lineage>
        <taxon>Bacteria</taxon>
        <taxon>Pseudomonadati</taxon>
        <taxon>Pseudomonadota</taxon>
        <taxon>Alphaproteobacteria</taxon>
        <taxon>Hyphomicrobiales</taxon>
        <taxon>Nitrobacteraceae</taxon>
        <taxon>Rhodopseudomonas</taxon>
    </lineage>
</organism>
<accession>Q136I8</accession>